<organism>
    <name type="scientific">Arabidopsis thaliana</name>
    <name type="common">Mouse-ear cress</name>
    <dbReference type="NCBI Taxonomy" id="3702"/>
    <lineage>
        <taxon>Eukaryota</taxon>
        <taxon>Viridiplantae</taxon>
        <taxon>Streptophyta</taxon>
        <taxon>Embryophyta</taxon>
        <taxon>Tracheophyta</taxon>
        <taxon>Spermatophyta</taxon>
        <taxon>Magnoliopsida</taxon>
        <taxon>eudicotyledons</taxon>
        <taxon>Gunneridae</taxon>
        <taxon>Pentapetalae</taxon>
        <taxon>rosids</taxon>
        <taxon>malvids</taxon>
        <taxon>Brassicales</taxon>
        <taxon>Brassicaceae</taxon>
        <taxon>Camelineae</taxon>
        <taxon>Arabidopsis</taxon>
    </lineage>
</organism>
<accession>Q9LVC0</accession>
<feature type="signal peptide" evidence="1 2">
    <location>
        <begin position="1"/>
        <end position="28"/>
    </location>
</feature>
<feature type="peptide" id="PRO_0000269015" description="Arabinogalactan protein 14" evidence="1 2">
    <location>
        <begin position="29"/>
        <end position="38"/>
    </location>
</feature>
<feature type="propeptide" id="PRO_0000269016" description="Removed in mature form" evidence="6 7">
    <location>
        <begin position="39"/>
        <end position="60"/>
    </location>
</feature>
<feature type="modified residue" description="4-hydroxyproline" evidence="1 2">
    <location>
        <position position="32"/>
    </location>
</feature>
<feature type="modified residue" description="4-hydroxyproline" evidence="1 2">
    <location>
        <position position="34"/>
    </location>
</feature>
<feature type="modified residue" description="4-hydroxyproline" evidence="1 2">
    <location>
        <position position="36"/>
    </location>
</feature>
<feature type="lipid moiety-binding region" description="GPI-anchor amidated serine" evidence="2">
    <location>
        <position position="38"/>
    </location>
</feature>
<feature type="glycosylation site" description="O-linked (Ara...) hydroxyproline" evidence="7">
    <location>
        <position position="32"/>
    </location>
</feature>
<feature type="glycosylation site" description="O-linked (Ara...) hydroxyproline" evidence="7">
    <location>
        <position position="34"/>
    </location>
</feature>
<feature type="glycosylation site" description="O-linked (Ara...) hydroxyproline" evidence="7">
    <location>
        <position position="36"/>
    </location>
</feature>
<dbReference type="EMBL" id="AF195895">
    <property type="protein sequence ID" value="AAG24282.1"/>
    <property type="molecule type" value="mRNA"/>
</dbReference>
<dbReference type="EMBL" id="AB019234">
    <property type="protein sequence ID" value="BAA97180.1"/>
    <property type="molecule type" value="Genomic_DNA"/>
</dbReference>
<dbReference type="EMBL" id="CP002688">
    <property type="protein sequence ID" value="AED96779.1"/>
    <property type="molecule type" value="Genomic_DNA"/>
</dbReference>
<dbReference type="EMBL" id="AK117330">
    <property type="protein sequence ID" value="BAC42000.1"/>
    <property type="molecule type" value="mRNA"/>
</dbReference>
<dbReference type="EMBL" id="BT004644">
    <property type="protein sequence ID" value="AAO42890.1"/>
    <property type="molecule type" value="mRNA"/>
</dbReference>
<dbReference type="RefSeq" id="NP_200465.1">
    <property type="nucleotide sequence ID" value="NM_125037.3"/>
</dbReference>
<dbReference type="BioGRID" id="20999">
    <property type="interactions" value="3"/>
</dbReference>
<dbReference type="FunCoup" id="Q9LVC0">
    <property type="interactions" value="14"/>
</dbReference>
<dbReference type="IntAct" id="Q9LVC0">
    <property type="interactions" value="3"/>
</dbReference>
<dbReference type="STRING" id="3702.Q9LVC0"/>
<dbReference type="GlyCosmos" id="Q9LVC0">
    <property type="glycosylation" value="3 sites, No reported glycans"/>
</dbReference>
<dbReference type="PaxDb" id="3702-AT5G56540.1"/>
<dbReference type="EnsemblPlants" id="AT5G56540.1">
    <property type="protein sequence ID" value="AT5G56540.1"/>
    <property type="gene ID" value="AT5G56540"/>
</dbReference>
<dbReference type="GeneID" id="835755"/>
<dbReference type="Gramene" id="AT5G56540.1">
    <property type="protein sequence ID" value="AT5G56540.1"/>
    <property type="gene ID" value="AT5G56540"/>
</dbReference>
<dbReference type="KEGG" id="ath:AT5G56540"/>
<dbReference type="Araport" id="AT5G56540"/>
<dbReference type="TAIR" id="AT5G56540">
    <property type="gene designation" value="AGP14"/>
</dbReference>
<dbReference type="eggNOG" id="ENOG502S9IR">
    <property type="taxonomic scope" value="Eukaryota"/>
</dbReference>
<dbReference type="HOGENOM" id="CLU_183441_3_0_1"/>
<dbReference type="InParanoid" id="Q9LVC0"/>
<dbReference type="OMA" id="AFSTVHQ"/>
<dbReference type="PhylomeDB" id="Q9LVC0"/>
<dbReference type="PRO" id="PR:Q9LVC0"/>
<dbReference type="Proteomes" id="UP000006548">
    <property type="component" value="Chromosome 5"/>
</dbReference>
<dbReference type="ExpressionAtlas" id="Q9LVC0">
    <property type="expression patterns" value="baseline and differential"/>
</dbReference>
<dbReference type="GO" id="GO:0005886">
    <property type="term" value="C:plasma membrane"/>
    <property type="evidence" value="ECO:0007669"/>
    <property type="project" value="UniProtKB-SubCell"/>
</dbReference>
<dbReference type="GO" id="GO:0098552">
    <property type="term" value="C:side of membrane"/>
    <property type="evidence" value="ECO:0007669"/>
    <property type="project" value="UniProtKB-KW"/>
</dbReference>
<dbReference type="GO" id="GO:0048767">
    <property type="term" value="P:root hair elongation"/>
    <property type="evidence" value="ECO:0000315"/>
    <property type="project" value="TAIR"/>
</dbReference>
<dbReference type="InterPro" id="IPR039281">
    <property type="entry name" value="AGP3/12/13/14/21"/>
</dbReference>
<dbReference type="PANTHER" id="PTHR34114">
    <property type="entry name" value="ARABINOGALACTAN PEPTIDE 1"/>
    <property type="match status" value="1"/>
</dbReference>
<dbReference type="PANTHER" id="PTHR34114:SF11">
    <property type="entry name" value="ARABINOGALACTAN PROTEIN 13-RELATED"/>
    <property type="match status" value="1"/>
</dbReference>
<proteinExistence type="evidence at protein level"/>
<sequence length="60" mass="6363">MEAMKMKLYVVVLVAVIAFSTVHQTVAAVDAPAPSPTSDASSFIPTFFASVAVMAFGFFF</sequence>
<reference key="1">
    <citation type="journal article" date="2000" name="Plant Cell">
        <title>The classical arabinogalactan protein gene family of Arabidopsis.</title>
        <authorList>
            <person name="Schultz C.J."/>
            <person name="Johnson K.L."/>
            <person name="Currie G."/>
            <person name="Bacic A."/>
        </authorList>
    </citation>
    <scope>NUCLEOTIDE SEQUENCE [MRNA]</scope>
    <scope>HYDROXYLATION AT PRO-32; PRO-34 AND PRO-36</scope>
    <scope>PROTEIN SEQUENCE OF 29-38</scope>
    <source>
        <strain>cv. Columbia</strain>
    </source>
</reference>
<reference key="2">
    <citation type="journal article" date="2000" name="DNA Res.">
        <title>Structural analysis of Arabidopsis thaliana chromosome 5. X. Sequence features of the regions of 3,076,755 bp covered by sixty P1 and TAC clones.</title>
        <authorList>
            <person name="Sato S."/>
            <person name="Nakamura Y."/>
            <person name="Kaneko T."/>
            <person name="Katoh T."/>
            <person name="Asamizu E."/>
            <person name="Kotani H."/>
            <person name="Tabata S."/>
        </authorList>
    </citation>
    <scope>NUCLEOTIDE SEQUENCE [LARGE SCALE GENOMIC DNA]</scope>
    <source>
        <strain>cv. Columbia</strain>
    </source>
</reference>
<reference key="3">
    <citation type="journal article" date="2017" name="Plant J.">
        <title>Araport11: a complete reannotation of the Arabidopsis thaliana reference genome.</title>
        <authorList>
            <person name="Cheng C.Y."/>
            <person name="Krishnakumar V."/>
            <person name="Chan A.P."/>
            <person name="Thibaud-Nissen F."/>
            <person name="Schobel S."/>
            <person name="Town C.D."/>
        </authorList>
    </citation>
    <scope>GENOME REANNOTATION</scope>
    <source>
        <strain>cv. Columbia</strain>
    </source>
</reference>
<reference key="4">
    <citation type="journal article" date="2002" name="Science">
        <title>Functional annotation of a full-length Arabidopsis cDNA collection.</title>
        <authorList>
            <person name="Seki M."/>
            <person name="Narusaka M."/>
            <person name="Kamiya A."/>
            <person name="Ishida J."/>
            <person name="Satou M."/>
            <person name="Sakurai T."/>
            <person name="Nakajima M."/>
            <person name="Enju A."/>
            <person name="Akiyama K."/>
            <person name="Oono Y."/>
            <person name="Muramatsu M."/>
            <person name="Hayashizaki Y."/>
            <person name="Kawai J."/>
            <person name="Carninci P."/>
            <person name="Itoh M."/>
            <person name="Ishii Y."/>
            <person name="Arakawa T."/>
            <person name="Shibata K."/>
            <person name="Shinagawa A."/>
            <person name="Shinozaki K."/>
        </authorList>
    </citation>
    <scope>NUCLEOTIDE SEQUENCE [LARGE SCALE MRNA]</scope>
    <source>
        <strain>cv. Columbia</strain>
    </source>
</reference>
<reference key="5">
    <citation type="journal article" date="2003" name="Science">
        <title>Empirical analysis of transcriptional activity in the Arabidopsis genome.</title>
        <authorList>
            <person name="Yamada K."/>
            <person name="Lim J."/>
            <person name="Dale J.M."/>
            <person name="Chen H."/>
            <person name="Shinn P."/>
            <person name="Palm C.J."/>
            <person name="Southwick A.M."/>
            <person name="Wu H.C."/>
            <person name="Kim C.J."/>
            <person name="Nguyen M."/>
            <person name="Pham P.K."/>
            <person name="Cheuk R.F."/>
            <person name="Karlin-Newmann G."/>
            <person name="Liu S.X."/>
            <person name="Lam B."/>
            <person name="Sakano H."/>
            <person name="Wu T."/>
            <person name="Yu G."/>
            <person name="Miranda M."/>
            <person name="Quach H.L."/>
            <person name="Tripp M."/>
            <person name="Chang C.H."/>
            <person name="Lee J.M."/>
            <person name="Toriumi M.J."/>
            <person name="Chan M.M."/>
            <person name="Tang C.C."/>
            <person name="Onodera C.S."/>
            <person name="Deng J.M."/>
            <person name="Akiyama K."/>
            <person name="Ansari Y."/>
            <person name="Arakawa T."/>
            <person name="Banh J."/>
            <person name="Banno F."/>
            <person name="Bowser L."/>
            <person name="Brooks S.Y."/>
            <person name="Carninci P."/>
            <person name="Chao Q."/>
            <person name="Choy N."/>
            <person name="Enju A."/>
            <person name="Goldsmith A.D."/>
            <person name="Gurjal M."/>
            <person name="Hansen N.F."/>
            <person name="Hayashizaki Y."/>
            <person name="Johnson-Hopson C."/>
            <person name="Hsuan V.W."/>
            <person name="Iida K."/>
            <person name="Karnes M."/>
            <person name="Khan S."/>
            <person name="Koesema E."/>
            <person name="Ishida J."/>
            <person name="Jiang P.X."/>
            <person name="Jones T."/>
            <person name="Kawai J."/>
            <person name="Kamiya A."/>
            <person name="Meyers C."/>
            <person name="Nakajima M."/>
            <person name="Narusaka M."/>
            <person name="Seki M."/>
            <person name="Sakurai T."/>
            <person name="Satou M."/>
            <person name="Tamse R."/>
            <person name="Vaysberg M."/>
            <person name="Wallender E.K."/>
            <person name="Wong C."/>
            <person name="Yamamura Y."/>
            <person name="Yuan S."/>
            <person name="Shinozaki K."/>
            <person name="Davis R.W."/>
            <person name="Theologis A."/>
            <person name="Ecker J.R."/>
        </authorList>
    </citation>
    <scope>NUCLEOTIDE SEQUENCE [LARGE SCALE MRNA]</scope>
    <source>
        <strain>cv. Columbia</strain>
    </source>
</reference>
<reference key="6">
    <citation type="journal article" date="2004" name="J. Biol. Chem.">
        <title>Post-translational modifications of arabinogalactan-peptides of Arabidopsis thaliana. Endoplasmic reticulum and glycosylphosphatidylinositol-anchor signal cleavage sites and hydroxylation of proline.</title>
        <authorList>
            <person name="Schultz C.J."/>
            <person name="Ferguson K.L."/>
            <person name="Lahnstein J."/>
            <person name="Bacic A."/>
        </authorList>
    </citation>
    <scope>PROTEIN SEQUENCE OF 29-38</scope>
    <scope>HYDROXYLATION AT PRO-32; PRO-34 AND PRO-36</scope>
    <scope>GLYCOSYLATION AT PRO-32; PRO-34 AND PRO-36</scope>
    <scope>GPI-ANCHOR AT SER-38</scope>
</reference>
<reference key="7">
    <citation type="journal article" date="2002" name="Plant Physiol.">
        <title>Using genomic resources to guide research directions. The arabinogalactan protein gene family as a test case.</title>
        <authorList>
            <person name="Schultz C.J."/>
            <person name="Rumsewicz M.P."/>
            <person name="Johnson K.L."/>
            <person name="Jones B.J."/>
            <person name="Gaspar Y.M."/>
            <person name="Bacic A."/>
        </authorList>
    </citation>
    <scope>GENE FAMILY</scope>
    <scope>NOMENCLATURE</scope>
</reference>
<reference key="8">
    <citation type="journal article" date="2011" name="Plant Physiol.">
        <title>Coexpression-based clustering of Arabidopsis root genes predicts functional modules in early phosphate deficiency signaling.</title>
        <authorList>
            <person name="Lin W.D."/>
            <person name="Liao Y.Y."/>
            <person name="Yang T.J."/>
            <person name="Pan C.Y."/>
            <person name="Buckhout T.J."/>
            <person name="Schmidt W."/>
        </authorList>
    </citation>
    <scope>FUNCTION</scope>
    <scope>DISRUPTION PHENOTYPE</scope>
</reference>
<keyword id="KW-1003">Cell membrane</keyword>
<keyword id="KW-0903">Direct protein sequencing</keyword>
<keyword id="KW-0325">Glycoprotein</keyword>
<keyword id="KW-0336">GPI-anchor</keyword>
<keyword id="KW-0379">Hydroxylation</keyword>
<keyword id="KW-0449">Lipoprotein</keyword>
<keyword id="KW-0472">Membrane</keyword>
<keyword id="KW-0654">Proteoglycan</keyword>
<keyword id="KW-1185">Reference proteome</keyword>
<keyword id="KW-0732">Signal</keyword>
<evidence type="ECO:0000269" key="1">
    <source>
    </source>
</evidence>
<evidence type="ECO:0000269" key="2">
    <source>
    </source>
</evidence>
<evidence type="ECO:0000269" key="3">
    <source>
    </source>
</evidence>
<evidence type="ECO:0000303" key="4">
    <source>
    </source>
</evidence>
<evidence type="ECO:0000305" key="5"/>
<evidence type="ECO:0000305" key="6">
    <source>
    </source>
</evidence>
<evidence type="ECO:0000305" key="7">
    <source>
    </source>
</evidence>
<name>AGP14_ARATH</name>
<comment type="function">
    <text evidence="3 5">Proteoglycan that seems to be implicated in diverse developmental roles such as differentiation, cell-cell recognition, embryogenesis and programmed cell death (Probable). Involved in the regulation of root hair elongation (PubMed:21248074).</text>
</comment>
<comment type="interaction">
    <interactant intactId="EBI-4429269">
        <id>Q9LVC0</id>
    </interactant>
    <interactant intactId="EBI-2319707">
        <id>Q94F58</id>
        <label>NAC089</label>
    </interactant>
    <organismsDiffer>false</organismsDiffer>
    <experiments>2</experiments>
</comment>
<comment type="subcellular location">
    <subcellularLocation>
        <location evidence="5">Cell membrane</location>
        <topology evidence="2">Lipid-anchor</topology>
        <topology evidence="2">GPI-anchor</topology>
    </subcellularLocation>
</comment>
<comment type="PTM">
    <text evidence="1 2">Contains 4-hydroxyproline; hydroxylated on Pro-32, Pro-34 and Pro-36.</text>
</comment>
<comment type="PTM">
    <text evidence="7">O-glycosylated on hydroxyprolines; noncontiguous hydroxylproline residues are glycosylated with arabinogalactan.</text>
</comment>
<comment type="disruption phenotype">
    <text evidence="3">Formation of abnormal long root hairs.</text>
</comment>
<comment type="similarity">
    <text evidence="5">Belongs to the AG-peptide AGP family.</text>
</comment>
<protein>
    <recommendedName>
        <fullName evidence="4">Arabinogalactan protein 14</fullName>
        <shortName evidence="4">AtAGP14</shortName>
    </recommendedName>
    <alternativeName>
        <fullName evidence="4">Arabinogalactan peptide 14</fullName>
        <shortName evidence="4">AG-peptide 14</shortName>
    </alternativeName>
</protein>
<gene>
    <name evidence="4" type="primary">AGP14</name>
    <name type="ordered locus">At5g56540</name>
    <name type="ORF">MKN22.5</name>
</gene>